<accession>Q6FMJ2</accession>
<evidence type="ECO:0000250" key="1"/>
<evidence type="ECO:0000250" key="2">
    <source>
        <dbReference type="UniProtKB" id="P36068"/>
    </source>
</evidence>
<evidence type="ECO:0000305" key="3"/>
<reference key="1">
    <citation type="journal article" date="2004" name="Nature">
        <title>Genome evolution in yeasts.</title>
        <authorList>
            <person name="Dujon B."/>
            <person name="Sherman D."/>
            <person name="Fischer G."/>
            <person name="Durrens P."/>
            <person name="Casaregola S."/>
            <person name="Lafontaine I."/>
            <person name="de Montigny J."/>
            <person name="Marck C."/>
            <person name="Neuveglise C."/>
            <person name="Talla E."/>
            <person name="Goffard N."/>
            <person name="Frangeul L."/>
            <person name="Aigle M."/>
            <person name="Anthouard V."/>
            <person name="Babour A."/>
            <person name="Barbe V."/>
            <person name="Barnay S."/>
            <person name="Blanchin S."/>
            <person name="Beckerich J.-M."/>
            <person name="Beyne E."/>
            <person name="Bleykasten C."/>
            <person name="Boisrame A."/>
            <person name="Boyer J."/>
            <person name="Cattolico L."/>
            <person name="Confanioleri F."/>
            <person name="de Daruvar A."/>
            <person name="Despons L."/>
            <person name="Fabre E."/>
            <person name="Fairhead C."/>
            <person name="Ferry-Dumazet H."/>
            <person name="Groppi A."/>
            <person name="Hantraye F."/>
            <person name="Hennequin C."/>
            <person name="Jauniaux N."/>
            <person name="Joyet P."/>
            <person name="Kachouri R."/>
            <person name="Kerrest A."/>
            <person name="Koszul R."/>
            <person name="Lemaire M."/>
            <person name="Lesur I."/>
            <person name="Ma L."/>
            <person name="Muller H."/>
            <person name="Nicaud J.-M."/>
            <person name="Nikolski M."/>
            <person name="Oztas S."/>
            <person name="Ozier-Kalogeropoulos O."/>
            <person name="Pellenz S."/>
            <person name="Potier S."/>
            <person name="Richard G.-F."/>
            <person name="Straub M.-L."/>
            <person name="Suleau A."/>
            <person name="Swennen D."/>
            <person name="Tekaia F."/>
            <person name="Wesolowski-Louvel M."/>
            <person name="Westhof E."/>
            <person name="Wirth B."/>
            <person name="Zeniou-Meyer M."/>
            <person name="Zivanovic Y."/>
            <person name="Bolotin-Fukuhara M."/>
            <person name="Thierry A."/>
            <person name="Bouchier C."/>
            <person name="Caudron B."/>
            <person name="Scarpelli C."/>
            <person name="Gaillardin C."/>
            <person name="Weissenbach J."/>
            <person name="Wincker P."/>
            <person name="Souciet J.-L."/>
        </authorList>
    </citation>
    <scope>NUCLEOTIDE SEQUENCE [LARGE SCALE GENOMIC DNA]</scope>
    <source>
        <strain>ATCC 2001 / BCRC 20586 / JCM 3761 / NBRC 0622 / NRRL Y-65 / CBS 138</strain>
    </source>
</reference>
<name>SHE2_CANGA</name>
<gene>
    <name type="primary">SHE2</name>
    <name type="ordered locus">CAGL0K07612g</name>
</gene>
<organism>
    <name type="scientific">Candida glabrata (strain ATCC 2001 / BCRC 20586 / JCM 3761 / NBRC 0622 / NRRL Y-65 / CBS 138)</name>
    <name type="common">Yeast</name>
    <name type="synonym">Nakaseomyces glabratus</name>
    <dbReference type="NCBI Taxonomy" id="284593"/>
    <lineage>
        <taxon>Eukaryota</taxon>
        <taxon>Fungi</taxon>
        <taxon>Dikarya</taxon>
        <taxon>Ascomycota</taxon>
        <taxon>Saccharomycotina</taxon>
        <taxon>Saccharomycetes</taxon>
        <taxon>Saccharomycetales</taxon>
        <taxon>Saccharomycetaceae</taxon>
        <taxon>Nakaseomyces</taxon>
    </lineage>
</organism>
<sequence length="244" mass="28351">MSREEQPYIVATDGIVDALTKISSVFSAYLSANIHILNKYINYLRRVTSLKNERSIMIKIVKKLRFFNDTLLSTDLAQLQTTYEGEEPELALNIQTFASYLVKCLETIDLLNYFLLKPLQKELIAKTLNFDLVFPEDITDTVEDTYNHFVKFTQWSIESLSIDDPLLDIEVVQFSLRCAEEDQSYAEETDNIFLQEVLPVKDSQEYETLTLQWLDVLNGKLAILGERFEKVADDWYKKFGKNRS</sequence>
<feature type="chain" id="PRO_0000408917" description="SWI5-dependent HO expression protein 2">
    <location>
        <begin position="1"/>
        <end position="244"/>
    </location>
</feature>
<protein>
    <recommendedName>
        <fullName>SWI5-dependent HO expression protein 2</fullName>
    </recommendedName>
</protein>
<keyword id="KW-0963">Cytoplasm</keyword>
<keyword id="KW-0509">mRNA transport</keyword>
<keyword id="KW-0539">Nucleus</keyword>
<keyword id="KW-1185">Reference proteome</keyword>
<keyword id="KW-0694">RNA-binding</keyword>
<keyword id="KW-0813">Transport</keyword>
<comment type="function">
    <text evidence="1">RNA-binding protein that binds specific mRNAs including the ASH1 mRNA, coding for a repressor of the HO endonuclease. Part of the mRNA localization machinery that restricts accumulation of certain proteins to the bud and in the daughter cell (By similarity).</text>
</comment>
<comment type="subunit">
    <text evidence="1">Homodimer and homotetramer.</text>
</comment>
<comment type="subcellular location">
    <subcellularLocation>
        <location evidence="2">Cytoplasm</location>
    </subcellularLocation>
    <subcellularLocation>
        <location evidence="2">Nucleus</location>
    </subcellularLocation>
    <text evidence="2">Shuttles between the nucleus and cytoplasm and is exported in an mRNA-dependent manner. The presence in the nucleus is essential for PUF6 and LOC1 to bind the ASH1 mRNA.</text>
</comment>
<comment type="similarity">
    <text evidence="3">Belongs to the SHE2 family.</text>
</comment>
<proteinExistence type="inferred from homology"/>
<dbReference type="EMBL" id="CR380957">
    <property type="protein sequence ID" value="CAG61515.1"/>
    <property type="molecule type" value="Genomic_DNA"/>
</dbReference>
<dbReference type="RefSeq" id="XP_448552.1">
    <property type="nucleotide sequence ID" value="XM_448552.1"/>
</dbReference>
<dbReference type="SMR" id="Q6FMJ2"/>
<dbReference type="FunCoup" id="Q6FMJ2">
    <property type="interactions" value="119"/>
</dbReference>
<dbReference type="STRING" id="284593.Q6FMJ2"/>
<dbReference type="EnsemblFungi" id="CAGL0K07612g-T">
    <property type="protein sequence ID" value="CAGL0K07612g-T-p1"/>
    <property type="gene ID" value="CAGL0K07612g"/>
</dbReference>
<dbReference type="KEGG" id="cgr:2890384"/>
<dbReference type="CGD" id="CAL0134471">
    <property type="gene designation" value="CAGL0K07612g"/>
</dbReference>
<dbReference type="VEuPathDB" id="FungiDB:B1J91_K07612g"/>
<dbReference type="VEuPathDB" id="FungiDB:CAGL0K07612g"/>
<dbReference type="eggNOG" id="ENOG502RXWH">
    <property type="taxonomic scope" value="Eukaryota"/>
</dbReference>
<dbReference type="HOGENOM" id="CLU_1129832_0_0_1"/>
<dbReference type="InParanoid" id="Q6FMJ2"/>
<dbReference type="OMA" id="HFVKFTQ"/>
<dbReference type="Proteomes" id="UP000002428">
    <property type="component" value="Chromosome K"/>
</dbReference>
<dbReference type="GO" id="GO:0005934">
    <property type="term" value="C:cellular bud tip"/>
    <property type="evidence" value="ECO:0007669"/>
    <property type="project" value="EnsemblFungi"/>
</dbReference>
<dbReference type="GO" id="GO:0005737">
    <property type="term" value="C:cytoplasm"/>
    <property type="evidence" value="ECO:0007669"/>
    <property type="project" value="UniProtKB-SubCell"/>
</dbReference>
<dbReference type="GO" id="GO:0005634">
    <property type="term" value="C:nucleus"/>
    <property type="evidence" value="ECO:0007669"/>
    <property type="project" value="UniProtKB-SubCell"/>
</dbReference>
<dbReference type="GO" id="GO:0008289">
    <property type="term" value="F:lipid binding"/>
    <property type="evidence" value="ECO:0007669"/>
    <property type="project" value="EnsemblFungi"/>
</dbReference>
<dbReference type="GO" id="GO:1990825">
    <property type="term" value="F:sequence-specific mRNA binding"/>
    <property type="evidence" value="ECO:0007669"/>
    <property type="project" value="EnsemblFungi"/>
</dbReference>
<dbReference type="GO" id="GO:0008298">
    <property type="term" value="P:intracellular mRNA localization"/>
    <property type="evidence" value="ECO:0007669"/>
    <property type="project" value="EnsemblFungi"/>
</dbReference>
<dbReference type="GO" id="GO:0007533">
    <property type="term" value="P:mating type switching"/>
    <property type="evidence" value="ECO:0007669"/>
    <property type="project" value="EnsemblFungi"/>
</dbReference>
<dbReference type="GO" id="GO:0051028">
    <property type="term" value="P:mRNA transport"/>
    <property type="evidence" value="ECO:0007669"/>
    <property type="project" value="UniProtKB-KW"/>
</dbReference>
<dbReference type="Gene3D" id="1.20.200.20">
    <property type="entry name" value="She2 domain"/>
    <property type="match status" value="1"/>
</dbReference>
<dbReference type="InterPro" id="IPR024261">
    <property type="entry name" value="RNA-bd_She2"/>
</dbReference>
<dbReference type="InterPro" id="IPR036827">
    <property type="entry name" value="She2_dom_sf"/>
</dbReference>
<dbReference type="Pfam" id="PF11435">
    <property type="entry name" value="She2p"/>
    <property type="match status" value="1"/>
</dbReference>
<dbReference type="SUPFAM" id="SSF116942">
    <property type="entry name" value="RNA-binding protein She2p"/>
    <property type="match status" value="1"/>
</dbReference>